<organism>
    <name type="scientific">Escherichia coli (strain SE11)</name>
    <dbReference type="NCBI Taxonomy" id="409438"/>
    <lineage>
        <taxon>Bacteria</taxon>
        <taxon>Pseudomonadati</taxon>
        <taxon>Pseudomonadota</taxon>
        <taxon>Gammaproteobacteria</taxon>
        <taxon>Enterobacterales</taxon>
        <taxon>Enterobacteriaceae</taxon>
        <taxon>Escherichia</taxon>
    </lineage>
</organism>
<feature type="chain" id="PRO_1000140730" description="Small ribosomal subunit protein uS4">
    <location>
        <begin position="1"/>
        <end position="206"/>
    </location>
</feature>
<feature type="domain" description="S4 RNA-binding" evidence="1">
    <location>
        <begin position="96"/>
        <end position="156"/>
    </location>
</feature>
<dbReference type="EMBL" id="AP009240">
    <property type="protein sequence ID" value="BAG79095.1"/>
    <property type="molecule type" value="Genomic_DNA"/>
</dbReference>
<dbReference type="RefSeq" id="WP_000135224.1">
    <property type="nucleotide sequence ID" value="NC_011415.1"/>
</dbReference>
<dbReference type="SMR" id="B6I210"/>
<dbReference type="GeneID" id="93778691"/>
<dbReference type="KEGG" id="ecy:ECSE_3571"/>
<dbReference type="HOGENOM" id="CLU_092403_0_2_6"/>
<dbReference type="Proteomes" id="UP000008199">
    <property type="component" value="Chromosome"/>
</dbReference>
<dbReference type="GO" id="GO:0015935">
    <property type="term" value="C:small ribosomal subunit"/>
    <property type="evidence" value="ECO:0007669"/>
    <property type="project" value="InterPro"/>
</dbReference>
<dbReference type="GO" id="GO:0019843">
    <property type="term" value="F:rRNA binding"/>
    <property type="evidence" value="ECO:0007669"/>
    <property type="project" value="UniProtKB-UniRule"/>
</dbReference>
<dbReference type="GO" id="GO:0003735">
    <property type="term" value="F:structural constituent of ribosome"/>
    <property type="evidence" value="ECO:0007669"/>
    <property type="project" value="InterPro"/>
</dbReference>
<dbReference type="GO" id="GO:0042274">
    <property type="term" value="P:ribosomal small subunit biogenesis"/>
    <property type="evidence" value="ECO:0007669"/>
    <property type="project" value="TreeGrafter"/>
</dbReference>
<dbReference type="GO" id="GO:0006412">
    <property type="term" value="P:translation"/>
    <property type="evidence" value="ECO:0007669"/>
    <property type="project" value="UniProtKB-UniRule"/>
</dbReference>
<dbReference type="CDD" id="cd00165">
    <property type="entry name" value="S4"/>
    <property type="match status" value="1"/>
</dbReference>
<dbReference type="FunFam" id="1.10.1050.10:FF:000001">
    <property type="entry name" value="30S ribosomal protein S4"/>
    <property type="match status" value="1"/>
</dbReference>
<dbReference type="FunFam" id="3.10.290.10:FF:000001">
    <property type="entry name" value="30S ribosomal protein S4"/>
    <property type="match status" value="1"/>
</dbReference>
<dbReference type="Gene3D" id="1.10.1050.10">
    <property type="entry name" value="Ribosomal Protein S4 Delta 41, Chain A, domain 1"/>
    <property type="match status" value="1"/>
</dbReference>
<dbReference type="Gene3D" id="3.10.290.10">
    <property type="entry name" value="RNA-binding S4 domain"/>
    <property type="match status" value="1"/>
</dbReference>
<dbReference type="HAMAP" id="MF_01306_B">
    <property type="entry name" value="Ribosomal_uS4_B"/>
    <property type="match status" value="1"/>
</dbReference>
<dbReference type="InterPro" id="IPR022801">
    <property type="entry name" value="Ribosomal_uS4"/>
</dbReference>
<dbReference type="InterPro" id="IPR005709">
    <property type="entry name" value="Ribosomal_uS4_bac-type"/>
</dbReference>
<dbReference type="InterPro" id="IPR018079">
    <property type="entry name" value="Ribosomal_uS4_CS"/>
</dbReference>
<dbReference type="InterPro" id="IPR001912">
    <property type="entry name" value="Ribosomal_uS4_N"/>
</dbReference>
<dbReference type="InterPro" id="IPR002942">
    <property type="entry name" value="S4_RNA-bd"/>
</dbReference>
<dbReference type="InterPro" id="IPR036986">
    <property type="entry name" value="S4_RNA-bd_sf"/>
</dbReference>
<dbReference type="NCBIfam" id="NF003717">
    <property type="entry name" value="PRK05327.1"/>
    <property type="match status" value="1"/>
</dbReference>
<dbReference type="NCBIfam" id="TIGR01017">
    <property type="entry name" value="rpsD_bact"/>
    <property type="match status" value="1"/>
</dbReference>
<dbReference type="PANTHER" id="PTHR11831">
    <property type="entry name" value="30S 40S RIBOSOMAL PROTEIN"/>
    <property type="match status" value="1"/>
</dbReference>
<dbReference type="PANTHER" id="PTHR11831:SF4">
    <property type="entry name" value="SMALL RIBOSOMAL SUBUNIT PROTEIN US4M"/>
    <property type="match status" value="1"/>
</dbReference>
<dbReference type="Pfam" id="PF00163">
    <property type="entry name" value="Ribosomal_S4"/>
    <property type="match status" value="1"/>
</dbReference>
<dbReference type="Pfam" id="PF01479">
    <property type="entry name" value="S4"/>
    <property type="match status" value="1"/>
</dbReference>
<dbReference type="SMART" id="SM01390">
    <property type="entry name" value="Ribosomal_S4"/>
    <property type="match status" value="1"/>
</dbReference>
<dbReference type="SMART" id="SM00363">
    <property type="entry name" value="S4"/>
    <property type="match status" value="1"/>
</dbReference>
<dbReference type="SUPFAM" id="SSF55174">
    <property type="entry name" value="Alpha-L RNA-binding motif"/>
    <property type="match status" value="1"/>
</dbReference>
<dbReference type="PROSITE" id="PS00632">
    <property type="entry name" value="RIBOSOMAL_S4"/>
    <property type="match status" value="1"/>
</dbReference>
<dbReference type="PROSITE" id="PS50889">
    <property type="entry name" value="S4"/>
    <property type="match status" value="1"/>
</dbReference>
<accession>B6I210</accession>
<gene>
    <name evidence="1" type="primary">rpsD</name>
    <name type="ordered locus">ECSE_3571</name>
</gene>
<comment type="function">
    <text evidence="1">One of the primary rRNA binding proteins, it binds directly to 16S rRNA where it nucleates assembly of the body of the 30S subunit.</text>
</comment>
<comment type="function">
    <text evidence="1">With S5 and S12 plays an important role in translational accuracy.</text>
</comment>
<comment type="subunit">
    <text evidence="1">Part of the 30S ribosomal subunit. Contacts protein S5. The interaction surface between S4 and S5 is involved in control of translational fidelity.</text>
</comment>
<comment type="similarity">
    <text evidence="1">Belongs to the universal ribosomal protein uS4 family.</text>
</comment>
<reference key="1">
    <citation type="journal article" date="2008" name="DNA Res.">
        <title>Complete genome sequence and comparative analysis of the wild-type commensal Escherichia coli strain SE11 isolated from a healthy adult.</title>
        <authorList>
            <person name="Oshima K."/>
            <person name="Toh H."/>
            <person name="Ogura Y."/>
            <person name="Sasamoto H."/>
            <person name="Morita H."/>
            <person name="Park S.-H."/>
            <person name="Ooka T."/>
            <person name="Iyoda S."/>
            <person name="Taylor T.D."/>
            <person name="Hayashi T."/>
            <person name="Itoh K."/>
            <person name="Hattori M."/>
        </authorList>
    </citation>
    <scope>NUCLEOTIDE SEQUENCE [LARGE SCALE GENOMIC DNA]</scope>
    <source>
        <strain>SE11</strain>
    </source>
</reference>
<proteinExistence type="inferred from homology"/>
<sequence length="206" mass="23469">MARYLGPKLKLSRREGTDLFLKSGVRAIDTKCKIEQAPGQHGARKPRLSDYGVQLREKQKVRRIYGVLERQFRNYYKEAARLKGNTGENLLALLEGRLDNVVYRMGFGATRAEARQLVSHKAIMVNGRVVNIASYQVSPNDVVSIREKAKKQSRVKAALELAEQREKPTWLEVDAGKMEGTFKRKPERSDLSADINEHLIVELYSK</sequence>
<evidence type="ECO:0000255" key="1">
    <source>
        <dbReference type="HAMAP-Rule" id="MF_01306"/>
    </source>
</evidence>
<evidence type="ECO:0000305" key="2"/>
<keyword id="KW-0687">Ribonucleoprotein</keyword>
<keyword id="KW-0689">Ribosomal protein</keyword>
<keyword id="KW-0694">RNA-binding</keyword>
<keyword id="KW-0699">rRNA-binding</keyword>
<name>RS4_ECOSE</name>
<protein>
    <recommendedName>
        <fullName evidence="1">Small ribosomal subunit protein uS4</fullName>
    </recommendedName>
    <alternativeName>
        <fullName evidence="2">30S ribosomal protein S4</fullName>
    </alternativeName>
</protein>